<name>PSTB1_STRP6</name>
<protein>
    <recommendedName>
        <fullName evidence="1">Phosphate import ATP-binding protein PstB 1</fullName>
        <ecNumber evidence="1">7.3.2.1</ecNumber>
    </recommendedName>
    <alternativeName>
        <fullName evidence="1">ABC phosphate transporter 1</fullName>
    </alternativeName>
    <alternativeName>
        <fullName evidence="1">Phosphate-transporting ATPase 1</fullName>
    </alternativeName>
</protein>
<gene>
    <name evidence="1" type="primary">pstB1</name>
    <name type="ordered locus">M6_Spy0941</name>
</gene>
<evidence type="ECO:0000255" key="1">
    <source>
        <dbReference type="HAMAP-Rule" id="MF_01702"/>
    </source>
</evidence>
<evidence type="ECO:0000305" key="2"/>
<keyword id="KW-0067">ATP-binding</keyword>
<keyword id="KW-1003">Cell membrane</keyword>
<keyword id="KW-0472">Membrane</keyword>
<keyword id="KW-0547">Nucleotide-binding</keyword>
<keyword id="KW-0592">Phosphate transport</keyword>
<keyword id="KW-1278">Translocase</keyword>
<keyword id="KW-0813">Transport</keyword>
<organism>
    <name type="scientific">Streptococcus pyogenes serotype M6 (strain ATCC BAA-946 / MGAS10394)</name>
    <dbReference type="NCBI Taxonomy" id="286636"/>
    <lineage>
        <taxon>Bacteria</taxon>
        <taxon>Bacillati</taxon>
        <taxon>Bacillota</taxon>
        <taxon>Bacilli</taxon>
        <taxon>Lactobacillales</taxon>
        <taxon>Streptococcaceae</taxon>
        <taxon>Streptococcus</taxon>
    </lineage>
</organism>
<accession>Q5XBY7</accession>
<reference key="1">
    <citation type="journal article" date="2004" name="J. Infect. Dis.">
        <title>Progress toward characterization of the group A Streptococcus metagenome: complete genome sequence of a macrolide-resistant serotype M6 strain.</title>
        <authorList>
            <person name="Banks D.J."/>
            <person name="Porcella S.F."/>
            <person name="Barbian K.D."/>
            <person name="Beres S.B."/>
            <person name="Philips L.E."/>
            <person name="Voyich J.M."/>
            <person name="DeLeo F.R."/>
            <person name="Martin J.M."/>
            <person name="Somerville G.A."/>
            <person name="Musser J.M."/>
        </authorList>
    </citation>
    <scope>NUCLEOTIDE SEQUENCE [LARGE SCALE GENOMIC DNA]</scope>
    <source>
        <strain>ATCC BAA-946 / MGAS10394</strain>
    </source>
</reference>
<comment type="function">
    <text evidence="1">Part of the ABC transporter complex PstSACB involved in phosphate import. Responsible for energy coupling to the transport system.</text>
</comment>
<comment type="catalytic activity">
    <reaction evidence="1">
        <text>phosphate(out) + ATP + H2O = ADP + 2 phosphate(in) + H(+)</text>
        <dbReference type="Rhea" id="RHEA:24440"/>
        <dbReference type="ChEBI" id="CHEBI:15377"/>
        <dbReference type="ChEBI" id="CHEBI:15378"/>
        <dbReference type="ChEBI" id="CHEBI:30616"/>
        <dbReference type="ChEBI" id="CHEBI:43474"/>
        <dbReference type="ChEBI" id="CHEBI:456216"/>
        <dbReference type="EC" id="7.3.2.1"/>
    </reaction>
</comment>
<comment type="subunit">
    <text evidence="1">The complex is composed of two ATP-binding proteins (PstB), two transmembrane proteins (PstC and PstA) and a solute-binding protein (PstS).</text>
</comment>
<comment type="subcellular location">
    <subcellularLocation>
        <location evidence="1">Cell membrane</location>
        <topology evidence="1">Peripheral membrane protein</topology>
    </subcellularLocation>
</comment>
<comment type="similarity">
    <text evidence="1">Belongs to the ABC transporter superfamily. Phosphate importer (TC 3.A.1.7) family.</text>
</comment>
<comment type="sequence caution" evidence="2">
    <conflict type="erroneous initiation">
        <sequence resource="EMBL-CDS" id="AAT87076"/>
    </conflict>
</comment>
<proteinExistence type="inferred from homology"/>
<feature type="chain" id="PRO_0000092907" description="Phosphate import ATP-binding protein PstB 1">
    <location>
        <begin position="1"/>
        <end position="252"/>
    </location>
</feature>
<feature type="domain" description="ABC transporter" evidence="1">
    <location>
        <begin position="6"/>
        <end position="247"/>
    </location>
</feature>
<feature type="binding site" evidence="1">
    <location>
        <begin position="38"/>
        <end position="45"/>
    </location>
    <ligand>
        <name>ATP</name>
        <dbReference type="ChEBI" id="CHEBI:30616"/>
    </ligand>
</feature>
<dbReference type="EC" id="7.3.2.1" evidence="1"/>
<dbReference type="EMBL" id="CP000003">
    <property type="protein sequence ID" value="AAT87076.1"/>
    <property type="status" value="ALT_INIT"/>
    <property type="molecule type" value="Genomic_DNA"/>
</dbReference>
<dbReference type="RefSeq" id="WP_021340546.1">
    <property type="nucleotide sequence ID" value="NC_006086.1"/>
</dbReference>
<dbReference type="SMR" id="Q5XBY7"/>
<dbReference type="KEGG" id="spa:M6_Spy0941"/>
<dbReference type="HOGENOM" id="CLU_000604_1_22_9"/>
<dbReference type="Proteomes" id="UP000001167">
    <property type="component" value="Chromosome"/>
</dbReference>
<dbReference type="GO" id="GO:0005886">
    <property type="term" value="C:plasma membrane"/>
    <property type="evidence" value="ECO:0007669"/>
    <property type="project" value="UniProtKB-SubCell"/>
</dbReference>
<dbReference type="GO" id="GO:0005524">
    <property type="term" value="F:ATP binding"/>
    <property type="evidence" value="ECO:0007669"/>
    <property type="project" value="UniProtKB-KW"/>
</dbReference>
<dbReference type="GO" id="GO:0016887">
    <property type="term" value="F:ATP hydrolysis activity"/>
    <property type="evidence" value="ECO:0007669"/>
    <property type="project" value="InterPro"/>
</dbReference>
<dbReference type="GO" id="GO:0015415">
    <property type="term" value="F:ATPase-coupled phosphate ion transmembrane transporter activity"/>
    <property type="evidence" value="ECO:0007669"/>
    <property type="project" value="UniProtKB-EC"/>
</dbReference>
<dbReference type="GO" id="GO:0035435">
    <property type="term" value="P:phosphate ion transmembrane transport"/>
    <property type="evidence" value="ECO:0007669"/>
    <property type="project" value="InterPro"/>
</dbReference>
<dbReference type="CDD" id="cd03260">
    <property type="entry name" value="ABC_PstB_phosphate_transporter"/>
    <property type="match status" value="1"/>
</dbReference>
<dbReference type="Gene3D" id="3.40.50.300">
    <property type="entry name" value="P-loop containing nucleotide triphosphate hydrolases"/>
    <property type="match status" value="1"/>
</dbReference>
<dbReference type="InterPro" id="IPR003593">
    <property type="entry name" value="AAA+_ATPase"/>
</dbReference>
<dbReference type="InterPro" id="IPR003439">
    <property type="entry name" value="ABC_transporter-like_ATP-bd"/>
</dbReference>
<dbReference type="InterPro" id="IPR017871">
    <property type="entry name" value="ABC_transporter-like_CS"/>
</dbReference>
<dbReference type="InterPro" id="IPR027417">
    <property type="entry name" value="P-loop_NTPase"/>
</dbReference>
<dbReference type="InterPro" id="IPR005670">
    <property type="entry name" value="PstB-like"/>
</dbReference>
<dbReference type="NCBIfam" id="TIGR00972">
    <property type="entry name" value="3a0107s01c2"/>
    <property type="match status" value="1"/>
</dbReference>
<dbReference type="PANTHER" id="PTHR43423">
    <property type="entry name" value="ABC TRANSPORTER I FAMILY MEMBER 17"/>
    <property type="match status" value="1"/>
</dbReference>
<dbReference type="PANTHER" id="PTHR43423:SF1">
    <property type="entry name" value="ABC TRANSPORTER I FAMILY MEMBER 17"/>
    <property type="match status" value="1"/>
</dbReference>
<dbReference type="Pfam" id="PF00005">
    <property type="entry name" value="ABC_tran"/>
    <property type="match status" value="1"/>
</dbReference>
<dbReference type="SMART" id="SM00382">
    <property type="entry name" value="AAA"/>
    <property type="match status" value="1"/>
</dbReference>
<dbReference type="SUPFAM" id="SSF52540">
    <property type="entry name" value="P-loop containing nucleoside triphosphate hydrolases"/>
    <property type="match status" value="1"/>
</dbReference>
<dbReference type="PROSITE" id="PS00211">
    <property type="entry name" value="ABC_TRANSPORTER_1"/>
    <property type="match status" value="1"/>
</dbReference>
<dbReference type="PROSITE" id="PS50893">
    <property type="entry name" value="ABC_TRANSPORTER_2"/>
    <property type="match status" value="1"/>
</dbReference>
<dbReference type="PROSITE" id="PS51238">
    <property type="entry name" value="PSTB"/>
    <property type="match status" value="1"/>
</dbReference>
<sequence length="252" mass="28061">MTEPILQIRDLSVYYNQKKTLKDVSLDLYPNEITALIGPSGSGKSTLLRSINRMNDLNPEVTITGSIVYNGHNIYSPRTDTVDLRKEIGMVFQQPNPFPMSIYENVVYGLHLKGIRDKSILDHAVESSLKGASIWNEVKDRLHDSAVGLSGGQQQRVCIARVLATSPRIILLDEPTSALDPISAGKIEETLLLLKKDYTLAIVTRSMQQASRLSDRTGFFLEGDLLECGPTKAMFMNPKRKETEDYISGKFG</sequence>